<protein>
    <recommendedName>
        <fullName>Cadherin-3</fullName>
    </recommendedName>
    <alternativeName>
        <fullName>Placental cadherin</fullName>
        <shortName>P-cadherin</shortName>
    </alternativeName>
</protein>
<dbReference type="EMBL" id="X63629">
    <property type="protein sequence ID" value="CAA45177.1"/>
    <property type="molecule type" value="mRNA"/>
</dbReference>
<dbReference type="EMBL" id="AK312554">
    <property type="protein sequence ID" value="BAG35451.1"/>
    <property type="molecule type" value="mRNA"/>
</dbReference>
<dbReference type="EMBL" id="CH471092">
    <property type="protein sequence ID" value="EAW83238.1"/>
    <property type="molecule type" value="Genomic_DNA"/>
</dbReference>
<dbReference type="EMBL" id="BC014462">
    <property type="protein sequence ID" value="AAH14462.1"/>
    <property type="molecule type" value="mRNA"/>
</dbReference>
<dbReference type="EMBL" id="BC041846">
    <property type="protein sequence ID" value="AAH41846.1"/>
    <property type="molecule type" value="mRNA"/>
</dbReference>
<dbReference type="EMBL" id="X95824">
    <property type="protein sequence ID" value="CAA65093.1"/>
    <property type="molecule type" value="Genomic_DNA"/>
</dbReference>
<dbReference type="CCDS" id="CCDS10868.1">
    <molecule id="P22223-1"/>
</dbReference>
<dbReference type="CCDS" id="CCDS82004.1">
    <molecule id="P22223-2"/>
</dbReference>
<dbReference type="PIR" id="A33659">
    <property type="entry name" value="IJHUCP"/>
</dbReference>
<dbReference type="RefSeq" id="NP_001304124.1">
    <molecule id="P22223-2"/>
    <property type="nucleotide sequence ID" value="NM_001317195.3"/>
</dbReference>
<dbReference type="RefSeq" id="NP_001304125.1">
    <property type="nucleotide sequence ID" value="NM_001317196.1"/>
</dbReference>
<dbReference type="RefSeq" id="NP_001784.2">
    <molecule id="P22223-1"/>
    <property type="nucleotide sequence ID" value="NM_001793.5"/>
</dbReference>
<dbReference type="PDB" id="4OY9">
    <property type="method" value="X-ray"/>
    <property type="resolution" value="1.62 A"/>
    <property type="chains" value="A=108-320"/>
</dbReference>
<dbReference type="PDB" id="4ZML">
    <property type="method" value="X-ray"/>
    <property type="resolution" value="1.85 A"/>
    <property type="chains" value="A=108-320"/>
</dbReference>
<dbReference type="PDB" id="4ZMN">
    <property type="method" value="X-ray"/>
    <property type="resolution" value="2.60 A"/>
    <property type="chains" value="A=108-338"/>
</dbReference>
<dbReference type="PDB" id="4ZMO">
    <property type="method" value="X-ray"/>
    <property type="resolution" value="2.48 A"/>
    <property type="chains" value="A=108-320"/>
</dbReference>
<dbReference type="PDB" id="4ZMP">
    <property type="method" value="X-ray"/>
    <property type="resolution" value="2.15 A"/>
    <property type="chains" value="A=108-320"/>
</dbReference>
<dbReference type="PDB" id="4ZMQ">
    <property type="method" value="X-ray"/>
    <property type="resolution" value="2.20 A"/>
    <property type="chains" value="A/B=108-320"/>
</dbReference>
<dbReference type="PDB" id="4ZMT">
    <property type="method" value="X-ray"/>
    <property type="resolution" value="2.70 A"/>
    <property type="chains" value="A/B/C/D/E/F=108-338"/>
</dbReference>
<dbReference type="PDB" id="4ZMV">
    <property type="method" value="X-ray"/>
    <property type="resolution" value="2.40 A"/>
    <property type="chains" value="A/B=108-320"/>
</dbReference>
<dbReference type="PDB" id="4ZMW">
    <property type="method" value="X-ray"/>
    <property type="resolution" value="2.30 A"/>
    <property type="chains" value="A/B=108-320"/>
</dbReference>
<dbReference type="PDB" id="4ZMX">
    <property type="method" value="X-ray"/>
    <property type="resolution" value="3.10 A"/>
    <property type="chains" value="A/B=108-320"/>
</dbReference>
<dbReference type="PDB" id="4ZMY">
    <property type="method" value="X-ray"/>
    <property type="resolution" value="1.50 A"/>
    <property type="chains" value="A=108-320"/>
</dbReference>
<dbReference type="PDB" id="4ZMZ">
    <property type="method" value="X-ray"/>
    <property type="resolution" value="2.05 A"/>
    <property type="chains" value="A=107-320"/>
</dbReference>
<dbReference type="PDB" id="5JYL">
    <property type="method" value="X-ray"/>
    <property type="resolution" value="2.55 A"/>
    <property type="chains" value="A/C=108-207"/>
</dbReference>
<dbReference type="PDB" id="5JYM">
    <property type="method" value="X-ray"/>
    <property type="resolution" value="2.45 A"/>
    <property type="chains" value="A/C=108-320"/>
</dbReference>
<dbReference type="PDB" id="6ZTB">
    <property type="method" value="X-ray"/>
    <property type="resolution" value="1.40 A"/>
    <property type="chains" value="I=108-324"/>
</dbReference>
<dbReference type="PDB" id="6ZTR">
    <property type="method" value="X-ray"/>
    <property type="resolution" value="2.10 A"/>
    <property type="chains" value="I/J=108-324"/>
</dbReference>
<dbReference type="PDB" id="7CME">
    <property type="method" value="X-ray"/>
    <property type="resolution" value="2.45 A"/>
    <property type="chains" value="A/B=108-320"/>
</dbReference>
<dbReference type="PDB" id="7CMF">
    <property type="method" value="X-ray"/>
    <property type="resolution" value="2.30 A"/>
    <property type="chains" value="A=107-320"/>
</dbReference>
<dbReference type="PDB" id="8HYI">
    <property type="method" value="X-ray"/>
    <property type="resolution" value="2.85 A"/>
    <property type="chains" value="A/B=108-320"/>
</dbReference>
<dbReference type="PDBsum" id="4OY9"/>
<dbReference type="PDBsum" id="4ZML"/>
<dbReference type="PDBsum" id="4ZMN"/>
<dbReference type="PDBsum" id="4ZMO"/>
<dbReference type="PDBsum" id="4ZMP"/>
<dbReference type="PDBsum" id="4ZMQ"/>
<dbReference type="PDBsum" id="4ZMT"/>
<dbReference type="PDBsum" id="4ZMV"/>
<dbReference type="PDBsum" id="4ZMW"/>
<dbReference type="PDBsum" id="4ZMX"/>
<dbReference type="PDBsum" id="4ZMY"/>
<dbReference type="PDBsum" id="4ZMZ"/>
<dbReference type="PDBsum" id="5JYL"/>
<dbReference type="PDBsum" id="5JYM"/>
<dbReference type="PDBsum" id="6ZTB"/>
<dbReference type="PDBsum" id="6ZTR"/>
<dbReference type="PDBsum" id="7CME"/>
<dbReference type="PDBsum" id="7CMF"/>
<dbReference type="PDBsum" id="8HYI"/>
<dbReference type="SMR" id="P22223"/>
<dbReference type="BioGRID" id="107436">
    <property type="interactions" value="34"/>
</dbReference>
<dbReference type="FunCoup" id="P22223">
    <property type="interactions" value="419"/>
</dbReference>
<dbReference type="IntAct" id="P22223">
    <property type="interactions" value="14"/>
</dbReference>
<dbReference type="MINT" id="P22223"/>
<dbReference type="STRING" id="9606.ENSP00000264012"/>
<dbReference type="ChEMBL" id="CHEMBL3989384"/>
<dbReference type="GlyCosmos" id="P22223">
    <property type="glycosylation" value="2 sites, No reported glycans"/>
</dbReference>
<dbReference type="GlyGen" id="P22223">
    <property type="glycosylation" value="3 sites"/>
</dbReference>
<dbReference type="iPTMnet" id="P22223"/>
<dbReference type="PhosphoSitePlus" id="P22223"/>
<dbReference type="BioMuta" id="CDH3"/>
<dbReference type="DMDM" id="146345382"/>
<dbReference type="jPOST" id="P22223"/>
<dbReference type="MassIVE" id="P22223"/>
<dbReference type="PaxDb" id="9606-ENSP00000264012"/>
<dbReference type="PeptideAtlas" id="P22223"/>
<dbReference type="ProteomicsDB" id="53966">
    <molecule id="P22223-1"/>
</dbReference>
<dbReference type="ProteomicsDB" id="53967">
    <molecule id="P22223-2"/>
</dbReference>
<dbReference type="Pumba" id="P22223"/>
<dbReference type="ABCD" id="P22223">
    <property type="antibodies" value="38 sequenced antibodies"/>
</dbReference>
<dbReference type="Antibodypedia" id="942">
    <property type="antibodies" value="975 antibodies from 43 providers"/>
</dbReference>
<dbReference type="DNASU" id="1001"/>
<dbReference type="Ensembl" id="ENST00000264012.9">
    <molecule id="P22223-1"/>
    <property type="protein sequence ID" value="ENSP00000264012.4"/>
    <property type="gene ID" value="ENSG00000062038.15"/>
</dbReference>
<dbReference type="Ensembl" id="ENST00000429102.6">
    <molecule id="P22223-2"/>
    <property type="protein sequence ID" value="ENSP00000398485.2"/>
    <property type="gene ID" value="ENSG00000062038.15"/>
</dbReference>
<dbReference type="GeneID" id="1001"/>
<dbReference type="KEGG" id="hsa:1001"/>
<dbReference type="MANE-Select" id="ENST00000264012.9">
    <property type="protein sequence ID" value="ENSP00000264012.4"/>
    <property type="RefSeq nucleotide sequence ID" value="NM_001793.6"/>
    <property type="RefSeq protein sequence ID" value="NP_001784.2"/>
</dbReference>
<dbReference type="UCSC" id="uc002ewf.3">
    <molecule id="P22223-1"/>
    <property type="organism name" value="human"/>
</dbReference>
<dbReference type="AGR" id="HGNC:1762"/>
<dbReference type="CTD" id="1001"/>
<dbReference type="DisGeNET" id="1001"/>
<dbReference type="GeneCards" id="CDH3"/>
<dbReference type="HGNC" id="HGNC:1762">
    <property type="gene designation" value="CDH3"/>
</dbReference>
<dbReference type="HPA" id="ENSG00000062038">
    <property type="expression patterns" value="Tissue enhanced (choroid plexus, ovary)"/>
</dbReference>
<dbReference type="MalaCards" id="CDH3"/>
<dbReference type="MIM" id="114021">
    <property type="type" value="gene"/>
</dbReference>
<dbReference type="MIM" id="225280">
    <property type="type" value="phenotype"/>
</dbReference>
<dbReference type="MIM" id="601553">
    <property type="type" value="phenotype"/>
</dbReference>
<dbReference type="neXtProt" id="NX_P22223"/>
<dbReference type="OpenTargets" id="ENSG00000062038"/>
<dbReference type="Orphanet" id="1897">
    <property type="disease" value="EEM syndrome"/>
</dbReference>
<dbReference type="Orphanet" id="1573">
    <property type="disease" value="Hypotrichosis with juvenile macular degeneration"/>
</dbReference>
<dbReference type="PharmGKB" id="PA26299"/>
<dbReference type="VEuPathDB" id="HostDB:ENSG00000062038"/>
<dbReference type="eggNOG" id="KOG3594">
    <property type="taxonomic scope" value="Eukaryota"/>
</dbReference>
<dbReference type="GeneTree" id="ENSGT00940000154848"/>
<dbReference type="HOGENOM" id="CLU_005284_2_0_1"/>
<dbReference type="InParanoid" id="P22223"/>
<dbReference type="OMA" id="EPVCTYT"/>
<dbReference type="OrthoDB" id="6079678at2759"/>
<dbReference type="PAN-GO" id="P22223">
    <property type="GO annotations" value="5 GO annotations based on evolutionary models"/>
</dbReference>
<dbReference type="PhylomeDB" id="P22223"/>
<dbReference type="TreeFam" id="TF316817"/>
<dbReference type="PathwayCommons" id="P22223"/>
<dbReference type="Reactome" id="R-HSA-418990">
    <property type="pathway name" value="Adherens junctions interactions"/>
</dbReference>
<dbReference type="SignaLink" id="P22223"/>
<dbReference type="SIGNOR" id="P22223"/>
<dbReference type="BioGRID-ORCS" id="1001">
    <property type="hits" value="10 hits in 1151 CRISPR screens"/>
</dbReference>
<dbReference type="ChiTaRS" id="CDH3">
    <property type="organism name" value="human"/>
</dbReference>
<dbReference type="EvolutionaryTrace" id="P22223"/>
<dbReference type="GeneWiki" id="CDH3_(gene)"/>
<dbReference type="GenomeRNAi" id="1001"/>
<dbReference type="Pharos" id="P22223">
    <property type="development level" value="Tbio"/>
</dbReference>
<dbReference type="PRO" id="PR:P22223"/>
<dbReference type="Proteomes" id="UP000005640">
    <property type="component" value="Chromosome 16"/>
</dbReference>
<dbReference type="RNAct" id="P22223">
    <property type="molecule type" value="protein"/>
</dbReference>
<dbReference type="Bgee" id="ENSG00000062038">
    <property type="expression patterns" value="Expressed in secondary oocyte and 140 other cell types or tissues"/>
</dbReference>
<dbReference type="ExpressionAtlas" id="P22223">
    <property type="expression patterns" value="baseline and differential"/>
</dbReference>
<dbReference type="GO" id="GO:0005912">
    <property type="term" value="C:adherens junction"/>
    <property type="evidence" value="ECO:0000318"/>
    <property type="project" value="GO_Central"/>
</dbReference>
<dbReference type="GO" id="GO:0016342">
    <property type="term" value="C:catenin complex"/>
    <property type="evidence" value="ECO:0000318"/>
    <property type="project" value="GO_Central"/>
</dbReference>
<dbReference type="GO" id="GO:0030054">
    <property type="term" value="C:cell junction"/>
    <property type="evidence" value="ECO:0000314"/>
    <property type="project" value="HPA"/>
</dbReference>
<dbReference type="GO" id="GO:0005737">
    <property type="term" value="C:cytoplasm"/>
    <property type="evidence" value="ECO:0000318"/>
    <property type="project" value="GO_Central"/>
</dbReference>
<dbReference type="GO" id="GO:0005886">
    <property type="term" value="C:plasma membrane"/>
    <property type="evidence" value="ECO:0000314"/>
    <property type="project" value="HPA"/>
</dbReference>
<dbReference type="GO" id="GO:0008013">
    <property type="term" value="F:beta-catenin binding"/>
    <property type="evidence" value="ECO:0000318"/>
    <property type="project" value="GO_Central"/>
</dbReference>
<dbReference type="GO" id="GO:0045296">
    <property type="term" value="F:cadherin binding"/>
    <property type="evidence" value="ECO:0000318"/>
    <property type="project" value="GO_Central"/>
</dbReference>
<dbReference type="GO" id="GO:0005509">
    <property type="term" value="F:calcium ion binding"/>
    <property type="evidence" value="ECO:0007669"/>
    <property type="project" value="InterPro"/>
</dbReference>
<dbReference type="GO" id="GO:0034332">
    <property type="term" value="P:adherens junction organization"/>
    <property type="evidence" value="ECO:0000318"/>
    <property type="project" value="GO_Central"/>
</dbReference>
<dbReference type="GO" id="GO:0016339">
    <property type="term" value="P:calcium-dependent cell-cell adhesion via plasma membrane cell adhesion molecules"/>
    <property type="evidence" value="ECO:0000318"/>
    <property type="project" value="GO_Central"/>
</dbReference>
<dbReference type="GO" id="GO:0007155">
    <property type="term" value="P:cell adhesion"/>
    <property type="evidence" value="ECO:0000304"/>
    <property type="project" value="ProtInc"/>
</dbReference>
<dbReference type="GO" id="GO:0016477">
    <property type="term" value="P:cell migration"/>
    <property type="evidence" value="ECO:0000318"/>
    <property type="project" value="GO_Central"/>
</dbReference>
<dbReference type="GO" id="GO:0000902">
    <property type="term" value="P:cell morphogenesis"/>
    <property type="evidence" value="ECO:0000318"/>
    <property type="project" value="GO_Central"/>
</dbReference>
<dbReference type="GO" id="GO:0044331">
    <property type="term" value="P:cell-cell adhesion mediated by cadherin"/>
    <property type="evidence" value="ECO:0000318"/>
    <property type="project" value="GO_Central"/>
</dbReference>
<dbReference type="GO" id="GO:0007043">
    <property type="term" value="P:cell-cell junction assembly"/>
    <property type="evidence" value="ECO:0000318"/>
    <property type="project" value="GO_Central"/>
</dbReference>
<dbReference type="GO" id="GO:0022405">
    <property type="term" value="P:hair cycle process"/>
    <property type="evidence" value="ECO:0000315"/>
    <property type="project" value="UniProtKB"/>
</dbReference>
<dbReference type="GO" id="GO:0007156">
    <property type="term" value="P:homophilic cell adhesion via plasma membrane adhesion molecules"/>
    <property type="evidence" value="ECO:0007669"/>
    <property type="project" value="InterPro"/>
</dbReference>
<dbReference type="GO" id="GO:0031424">
    <property type="term" value="P:keratinization"/>
    <property type="evidence" value="ECO:0000315"/>
    <property type="project" value="UniProtKB"/>
</dbReference>
<dbReference type="GO" id="GO:0051796">
    <property type="term" value="P:negative regulation of timing of catagen"/>
    <property type="evidence" value="ECO:0000315"/>
    <property type="project" value="UniProtKB"/>
</dbReference>
<dbReference type="GO" id="GO:0030512">
    <property type="term" value="P:negative regulation of transforming growth factor beta receptor signaling pathway"/>
    <property type="evidence" value="ECO:0000315"/>
    <property type="project" value="UniProtKB"/>
</dbReference>
<dbReference type="GO" id="GO:0090263">
    <property type="term" value="P:positive regulation of canonical Wnt signaling pathway"/>
    <property type="evidence" value="ECO:0000315"/>
    <property type="project" value="UniProtKB"/>
</dbReference>
<dbReference type="GO" id="GO:0010628">
    <property type="term" value="P:positive regulation of gene expression"/>
    <property type="evidence" value="ECO:0000315"/>
    <property type="project" value="UniProtKB"/>
</dbReference>
<dbReference type="GO" id="GO:0043568">
    <property type="term" value="P:positive regulation of insulin-like growth factor receptor signaling pathway"/>
    <property type="evidence" value="ECO:0000315"/>
    <property type="project" value="UniProtKB"/>
</dbReference>
<dbReference type="GO" id="GO:0010838">
    <property type="term" value="P:positive regulation of keratinocyte proliferation"/>
    <property type="evidence" value="ECO:0000315"/>
    <property type="project" value="UniProtKB"/>
</dbReference>
<dbReference type="GO" id="GO:0048023">
    <property type="term" value="P:positive regulation of melanin biosynthetic process"/>
    <property type="evidence" value="ECO:0000315"/>
    <property type="project" value="UniProtKB"/>
</dbReference>
<dbReference type="GO" id="GO:1902910">
    <property type="term" value="P:positive regulation of melanosome transport"/>
    <property type="evidence" value="ECO:0000315"/>
    <property type="project" value="UniProtKB"/>
</dbReference>
<dbReference type="GO" id="GO:0032773">
    <property type="term" value="P:positive regulation of tyrosinase activity"/>
    <property type="evidence" value="ECO:0000315"/>
    <property type="project" value="UniProtKB"/>
</dbReference>
<dbReference type="GO" id="GO:0001895">
    <property type="term" value="P:retina homeostasis"/>
    <property type="evidence" value="ECO:0000315"/>
    <property type="project" value="UniProtKB"/>
</dbReference>
<dbReference type="GO" id="GO:0007601">
    <property type="term" value="P:visual perception"/>
    <property type="evidence" value="ECO:0007669"/>
    <property type="project" value="UniProtKB-KW"/>
</dbReference>
<dbReference type="CDD" id="cd11304">
    <property type="entry name" value="Cadherin_repeat"/>
    <property type="match status" value="3"/>
</dbReference>
<dbReference type="FunFam" id="2.60.40.60:FF:000011">
    <property type="entry name" value="Cadherin 1"/>
    <property type="match status" value="1"/>
</dbReference>
<dbReference type="FunFam" id="2.60.40.60:FF:000019">
    <property type="entry name" value="Cadherin 2"/>
    <property type="match status" value="1"/>
</dbReference>
<dbReference type="FunFam" id="2.60.40.60:FF:000022">
    <property type="entry name" value="Cadherin 2"/>
    <property type="match status" value="1"/>
</dbReference>
<dbReference type="FunFam" id="2.60.40.60:FF:000027">
    <property type="entry name" value="Cadherin 2"/>
    <property type="match status" value="1"/>
</dbReference>
<dbReference type="FunFam" id="4.10.900.10:FF:000001">
    <property type="entry name" value="Cadherin 2"/>
    <property type="match status" value="1"/>
</dbReference>
<dbReference type="FunFam" id="2.60.40.60:FF:000031">
    <property type="entry name" value="Cadherin 3"/>
    <property type="match status" value="1"/>
</dbReference>
<dbReference type="Gene3D" id="2.60.40.60">
    <property type="entry name" value="Cadherins"/>
    <property type="match status" value="5"/>
</dbReference>
<dbReference type="Gene3D" id="4.10.900.10">
    <property type="entry name" value="TCF3-CBD (Catenin binding domain)"/>
    <property type="match status" value="1"/>
</dbReference>
<dbReference type="InterPro" id="IPR039808">
    <property type="entry name" value="Cadherin"/>
</dbReference>
<dbReference type="InterPro" id="IPR002126">
    <property type="entry name" value="Cadherin-like_dom"/>
</dbReference>
<dbReference type="InterPro" id="IPR015919">
    <property type="entry name" value="Cadherin-like_sf"/>
</dbReference>
<dbReference type="InterPro" id="IPR020894">
    <property type="entry name" value="Cadherin_CS"/>
</dbReference>
<dbReference type="InterPro" id="IPR014868">
    <property type="entry name" value="Cadherin_pro_dom"/>
</dbReference>
<dbReference type="InterPro" id="IPR000233">
    <property type="entry name" value="Cadherin_Y-type_LIR"/>
</dbReference>
<dbReference type="InterPro" id="IPR027397">
    <property type="entry name" value="Catenin-bd_sf"/>
</dbReference>
<dbReference type="PANTHER" id="PTHR24027">
    <property type="entry name" value="CADHERIN-23"/>
    <property type="match status" value="1"/>
</dbReference>
<dbReference type="PANTHER" id="PTHR24027:SF446">
    <property type="entry name" value="CADHERIN-3"/>
    <property type="match status" value="1"/>
</dbReference>
<dbReference type="Pfam" id="PF01049">
    <property type="entry name" value="CADH_Y-type_LIR"/>
    <property type="match status" value="1"/>
</dbReference>
<dbReference type="Pfam" id="PF00028">
    <property type="entry name" value="Cadherin"/>
    <property type="match status" value="4"/>
</dbReference>
<dbReference type="PRINTS" id="PR00205">
    <property type="entry name" value="CADHERIN"/>
</dbReference>
<dbReference type="SMART" id="SM00112">
    <property type="entry name" value="CA"/>
    <property type="match status" value="4"/>
</dbReference>
<dbReference type="SMART" id="SM01055">
    <property type="entry name" value="Cadherin_pro"/>
    <property type="match status" value="1"/>
</dbReference>
<dbReference type="SUPFAM" id="SSF49313">
    <property type="entry name" value="Cadherin-like"/>
    <property type="match status" value="5"/>
</dbReference>
<dbReference type="PROSITE" id="PS00232">
    <property type="entry name" value="CADHERIN_1"/>
    <property type="match status" value="3"/>
</dbReference>
<dbReference type="PROSITE" id="PS50268">
    <property type="entry name" value="CADHERIN_2"/>
    <property type="match status" value="5"/>
</dbReference>
<sequence>MGLPRGPLASLLLLQVCWLQCAASEPCRAVFREAEVTLEAGGAEQEPGQALGKVFMGCPGQEPALFSTDNDDFTVRNGETVQERRSLKERNPLKIFPSKRILRRHKRDWVVAPISVPENGKGPFPQRLNQLKSNKDRDTKIFYSITGPGADSPPEGVFAVEKETGWLLLNKPLDREEIAKYELFGHAVSENGASVEDPMNISIIVTDQNDHKPKFTQDTFRGSVLEGVLPGTSVMQVTATDEDDAIYTYNGVVAYSIHSQEPKDPHDLMFTIHRSTGTISVISSGLDREKVPEYTLTIQATDMDGDGSTTTAVAVVEILDANDNAPMFDPQKYEAHVPENAVGHEVQRLTVTDLDAPNSPAWRATYLIMGGDDGDHFTITTHPESNQGILTTRKGLDFEAKNQHTLYVEVTNEAPFVLKLPTSTATIVVHVEDVNEAPVFVPPSKVVEVQEGIPTGEPVCVYTAEDPDKENQKISYRILRDPAGWLAMDPDSGQVTAVGTLDREDEQFVRNNIYEVMVLAMDNGSPPTTGTGTLLLTLIDVNDHGPVPEPRQITICNQSPVRQVLNITDKDLSPHTSPFQAQLTDDSDIYWTAEVNEEGDTVVLSLKKFLKQDTYDVHLSLSDHGNKEQLTVIRATVCDCHGHVETCPGPWKGGFILPVLGAVLALLFLLLVLLLLVRKKRKIKEPLLLPEDDTRDNVFYYGEEGGGEEDQDYDITQLHRGLEARPEVVLRNDVAPTIIPTPMYRPRPANPDEIGNFIIENLKAANTDPTAPPYDTLLVFDYEGSGSDAASLSSLTSSASDQDQDYDYLNEWGSRFKKLADMYGGGEDD</sequence>
<name>CADH3_HUMAN</name>
<comment type="function">
    <text>Cadherins are calcium-dependent cell adhesion proteins. They preferentially interact with themselves in a homophilic manner in connecting cells; cadherins may thus contribute to the sorting of heterogeneous cell types.</text>
</comment>
<comment type="subunit">
    <text evidence="9 10">Interacts with CDCP1 and CTNNB1.</text>
</comment>
<comment type="subcellular location">
    <subcellularLocation>
        <location>Cell membrane</location>
        <topology>Single-pass type I membrane protein</topology>
    </subcellularLocation>
</comment>
<comment type="alternative products">
    <event type="alternative splicing"/>
    <isoform>
        <id>P22223-1</id>
        <name>1</name>
        <sequence type="displayed"/>
    </isoform>
    <isoform>
        <id>P22223-2</id>
        <name>2</name>
        <sequence type="described" ref="VSP_024820"/>
    </isoform>
</comment>
<comment type="tissue specificity">
    <text evidence="11">Expressed in some normal epithelial tissues and in some carcinoma cell lines.</text>
</comment>
<comment type="domain">
    <text evidence="1">Three calcium ions are usually bound at the interface of each cadherin domain and rigidify the connections, imparting a strong curvature to the full-length ectodomain.</text>
</comment>
<comment type="disease" evidence="4 5">
    <disease id="DI-01803">
        <name>Hypotrichosis congenital with juvenile macular dystrophy</name>
        <acronym>HJMD</acronym>
        <description>A disorder characterized by congenital hypotrichosis, early hair loss, and severe degenerative changes of the retinal macula that culminate in blindness during the second to third decade of life.</description>
        <dbReference type="MIM" id="601553"/>
    </disease>
    <text>The disease is caused by variants affecting the gene represented in this entry.</text>
</comment>
<comment type="disease" evidence="8">
    <disease id="DI-00433">
        <name>Ectodermal dysplasia, ectrodactyly, and macular dystrophy syndrome</name>
        <acronym>EEMS</acronym>
        <description>A form of ectodermal dysplasia, a heterogeneous group of disorders due to abnormal development of two or more ectodermal structures. It is an autosomal recessive condition characterized by features of ectodermal dysplasia such as sparse eyebrows and scalp hair, and selective tooth agenesis associated with macular dystrophy and ectrodactyly.</description>
        <dbReference type="MIM" id="225280"/>
    </disease>
    <text>The disease is caused by variants affecting the gene represented in this entry.</text>
</comment>
<feature type="signal peptide" evidence="2">
    <location>
        <begin position="1"/>
        <end position="24"/>
    </location>
</feature>
<feature type="propeptide" id="PRO_0000003745">
    <location>
        <begin position="25"/>
        <end position="107"/>
    </location>
</feature>
<feature type="chain" id="PRO_0000003746" description="Cadherin-3">
    <location>
        <begin position="108"/>
        <end position="829"/>
    </location>
</feature>
<feature type="topological domain" description="Extracellular" evidence="2">
    <location>
        <begin position="108"/>
        <end position="654"/>
    </location>
</feature>
<feature type="transmembrane region" description="Helical" evidence="2">
    <location>
        <begin position="655"/>
        <end position="677"/>
    </location>
</feature>
<feature type="topological domain" description="Cytoplasmic" evidence="2">
    <location>
        <begin position="678"/>
        <end position="829"/>
    </location>
</feature>
<feature type="domain" description="Cadherin 1" evidence="3">
    <location>
        <begin position="108"/>
        <end position="215"/>
    </location>
</feature>
<feature type="domain" description="Cadherin 2" evidence="3">
    <location>
        <begin position="216"/>
        <end position="328"/>
    </location>
</feature>
<feature type="domain" description="Cadherin 3" evidence="3">
    <location>
        <begin position="329"/>
        <end position="440"/>
    </location>
</feature>
<feature type="domain" description="Cadherin 4" evidence="3">
    <location>
        <begin position="441"/>
        <end position="546"/>
    </location>
</feature>
<feature type="domain" description="Cadherin 5" evidence="3">
    <location>
        <begin position="547"/>
        <end position="650"/>
    </location>
</feature>
<feature type="glycosylation site" description="N-linked (GlcNAc...) asparagine" evidence="2">
    <location>
        <position position="200"/>
    </location>
</feature>
<feature type="glycosylation site" description="N-linked (GlcNAc...) asparagine" evidence="2">
    <location>
        <position position="566"/>
    </location>
</feature>
<feature type="splice variant" id="VSP_024820" description="In isoform 2." evidence="14">
    <original>NLKAANTDPTAPPYDTLLVFDYEGSGSDAASLSSLTSSASDQDQDYDYLNEWGSRFKKLADMYGGGEDD</original>
    <variation>GRGERGSQRGNGGLQLARGRTRRS</variation>
    <location>
        <begin position="761"/>
        <end position="829"/>
    </location>
</feature>
<feature type="sequence variant" id="VAR_031929" description="In dbSNP:rs17854171." evidence="7">
    <original>V</original>
    <variation>M</variation>
    <location>
        <position position="237"/>
    </location>
</feature>
<feature type="sequence variant" id="VAR_033010" description="In EEMS; dbSNP:rs121434543." evidence="8">
    <original>N</original>
    <variation>I</variation>
    <location>
        <position position="322"/>
    </location>
</feature>
<feature type="sequence variant" id="VAR_031930" description="In dbSNP:rs34494880.">
    <original>R</original>
    <variation>H</variation>
    <location>
        <position position="477"/>
    </location>
</feature>
<feature type="sequence variant" id="VAR_015422" description="In HJMD; dbSNP:rs121434542." evidence="5">
    <original>R</original>
    <variation>H</variation>
    <location>
        <position position="503"/>
    </location>
</feature>
<feature type="sequence variant" id="VAR_031931" description="In dbSNP:rs1126933." evidence="6 8 12 13">
    <original>Q</original>
    <variation>H</variation>
    <location>
        <position position="563"/>
    </location>
</feature>
<feature type="strand" evidence="16">
    <location>
        <begin position="108"/>
        <end position="110"/>
    </location>
</feature>
<feature type="strand" evidence="18">
    <location>
        <begin position="114"/>
        <end position="117"/>
    </location>
</feature>
<feature type="strand" evidence="18">
    <location>
        <begin position="124"/>
        <end position="130"/>
    </location>
</feature>
<feature type="helix" evidence="18">
    <location>
        <begin position="134"/>
        <end position="137"/>
    </location>
</feature>
<feature type="strand" evidence="18">
    <location>
        <begin position="141"/>
        <end position="148"/>
    </location>
</feature>
<feature type="turn" evidence="18">
    <location>
        <begin position="149"/>
        <end position="151"/>
    </location>
</feature>
<feature type="strand" evidence="18">
    <location>
        <begin position="152"/>
        <end position="154"/>
    </location>
</feature>
<feature type="strand" evidence="18">
    <location>
        <begin position="157"/>
        <end position="160"/>
    </location>
</feature>
<feature type="turn" evidence="18">
    <location>
        <begin position="162"/>
        <end position="164"/>
    </location>
</feature>
<feature type="strand" evidence="18">
    <location>
        <begin position="166"/>
        <end position="169"/>
    </location>
</feature>
<feature type="turn" evidence="18">
    <location>
        <begin position="175"/>
        <end position="177"/>
    </location>
</feature>
<feature type="strand" evidence="18">
    <location>
        <begin position="179"/>
        <end position="189"/>
    </location>
</feature>
<feature type="strand" evidence="17">
    <location>
        <begin position="194"/>
        <end position="196"/>
    </location>
</feature>
<feature type="strand" evidence="18">
    <location>
        <begin position="199"/>
        <end position="206"/>
    </location>
</feature>
<feature type="strand" evidence="18">
    <location>
        <begin position="214"/>
        <end position="216"/>
    </location>
</feature>
<feature type="strand" evidence="18">
    <location>
        <begin position="218"/>
        <end position="225"/>
    </location>
</feature>
<feature type="strand" evidence="18">
    <location>
        <begin position="233"/>
        <end position="236"/>
    </location>
</feature>
<feature type="strand" evidence="18">
    <location>
        <begin position="246"/>
        <end position="249"/>
    </location>
</feature>
<feature type="strand" evidence="18">
    <location>
        <begin position="254"/>
        <end position="262"/>
    </location>
</feature>
<feature type="strand" evidence="15">
    <location>
        <begin position="265"/>
        <end position="267"/>
    </location>
</feature>
<feature type="strand" evidence="18">
    <location>
        <begin position="269"/>
        <end position="272"/>
    </location>
</feature>
<feature type="turn" evidence="18">
    <location>
        <begin position="274"/>
        <end position="276"/>
    </location>
</feature>
<feature type="strand" evidence="18">
    <location>
        <begin position="278"/>
        <end position="281"/>
    </location>
</feature>
<feature type="turn" evidence="18">
    <location>
        <begin position="288"/>
        <end position="290"/>
    </location>
</feature>
<feature type="strand" evidence="18">
    <location>
        <begin position="293"/>
        <end position="301"/>
    </location>
</feature>
<feature type="helix" evidence="18">
    <location>
        <begin position="303"/>
        <end position="305"/>
    </location>
</feature>
<feature type="strand" evidence="18">
    <location>
        <begin position="309"/>
        <end position="319"/>
    </location>
</feature>
<accession>P22223</accession>
<accession>B2R6F4</accession>
<accession>Q05DI6</accession>
<proteinExistence type="evidence at protein level"/>
<organism>
    <name type="scientific">Homo sapiens</name>
    <name type="common">Human</name>
    <dbReference type="NCBI Taxonomy" id="9606"/>
    <lineage>
        <taxon>Eukaryota</taxon>
        <taxon>Metazoa</taxon>
        <taxon>Chordata</taxon>
        <taxon>Craniata</taxon>
        <taxon>Vertebrata</taxon>
        <taxon>Euteleostomi</taxon>
        <taxon>Mammalia</taxon>
        <taxon>Eutheria</taxon>
        <taxon>Euarchontoglires</taxon>
        <taxon>Primates</taxon>
        <taxon>Haplorrhini</taxon>
        <taxon>Catarrhini</taxon>
        <taxon>Hominidae</taxon>
        <taxon>Homo</taxon>
    </lineage>
</organism>
<evidence type="ECO:0000250" key="1"/>
<evidence type="ECO:0000255" key="2"/>
<evidence type="ECO:0000255" key="3">
    <source>
        <dbReference type="PROSITE-ProRule" id="PRU00043"/>
    </source>
</evidence>
<evidence type="ECO:0000269" key="4">
    <source>
    </source>
</evidence>
<evidence type="ECO:0000269" key="5">
    <source>
    </source>
</evidence>
<evidence type="ECO:0000269" key="6">
    <source>
    </source>
</evidence>
<evidence type="ECO:0000269" key="7">
    <source>
    </source>
</evidence>
<evidence type="ECO:0000269" key="8">
    <source>
    </source>
</evidence>
<evidence type="ECO:0000269" key="9">
    <source>
    </source>
</evidence>
<evidence type="ECO:0000269" key="10">
    <source>
    </source>
</evidence>
<evidence type="ECO:0000269" key="11">
    <source>
    </source>
</evidence>
<evidence type="ECO:0000269" key="12">
    <source>
    </source>
</evidence>
<evidence type="ECO:0000269" key="13">
    <source ref="3"/>
</evidence>
<evidence type="ECO:0000303" key="14">
    <source>
    </source>
</evidence>
<evidence type="ECO:0007829" key="15">
    <source>
        <dbReference type="PDB" id="4ZMP"/>
    </source>
</evidence>
<evidence type="ECO:0007829" key="16">
    <source>
        <dbReference type="PDB" id="4ZMQ"/>
    </source>
</evidence>
<evidence type="ECO:0007829" key="17">
    <source>
        <dbReference type="PDB" id="4ZMT"/>
    </source>
</evidence>
<evidence type="ECO:0007829" key="18">
    <source>
        <dbReference type="PDB" id="6ZTB"/>
    </source>
</evidence>
<reference key="1">
    <citation type="journal article" date="1989" name="J. Cell Biol.">
        <title>Molecular cloning of a human Ca2+-dependent cell-cell adhesion molecule homologous to mouse placental cadherin: its low expression in human placental tissues.</title>
        <authorList>
            <person name="Shimoyama Y."/>
            <person name="Yoshida T."/>
            <person name="Terada M."/>
            <person name="Shimosato Y."/>
            <person name="Abe O."/>
            <person name="Hirohashi S."/>
        </authorList>
    </citation>
    <scope>NUCLEOTIDE SEQUENCE [MRNA] (ISOFORM 1)</scope>
    <scope>VARIANT HIS-563</scope>
</reference>
<reference key="2">
    <citation type="journal article" date="2004" name="Nat. Genet.">
        <title>Complete sequencing and characterization of 21,243 full-length human cDNAs.</title>
        <authorList>
            <person name="Ota T."/>
            <person name="Suzuki Y."/>
            <person name="Nishikawa T."/>
            <person name="Otsuki T."/>
            <person name="Sugiyama T."/>
            <person name="Irie R."/>
            <person name="Wakamatsu A."/>
            <person name="Hayashi K."/>
            <person name="Sato H."/>
            <person name="Nagai K."/>
            <person name="Kimura K."/>
            <person name="Makita H."/>
            <person name="Sekine M."/>
            <person name="Obayashi M."/>
            <person name="Nishi T."/>
            <person name="Shibahara T."/>
            <person name="Tanaka T."/>
            <person name="Ishii S."/>
            <person name="Yamamoto J."/>
            <person name="Saito K."/>
            <person name="Kawai Y."/>
            <person name="Isono Y."/>
            <person name="Nakamura Y."/>
            <person name="Nagahari K."/>
            <person name="Murakami K."/>
            <person name="Yasuda T."/>
            <person name="Iwayanagi T."/>
            <person name="Wagatsuma M."/>
            <person name="Shiratori A."/>
            <person name="Sudo H."/>
            <person name="Hosoiri T."/>
            <person name="Kaku Y."/>
            <person name="Kodaira H."/>
            <person name="Kondo H."/>
            <person name="Sugawara M."/>
            <person name="Takahashi M."/>
            <person name="Kanda K."/>
            <person name="Yokoi T."/>
            <person name="Furuya T."/>
            <person name="Kikkawa E."/>
            <person name="Omura Y."/>
            <person name="Abe K."/>
            <person name="Kamihara K."/>
            <person name="Katsuta N."/>
            <person name="Sato K."/>
            <person name="Tanikawa M."/>
            <person name="Yamazaki M."/>
            <person name="Ninomiya K."/>
            <person name="Ishibashi T."/>
            <person name="Yamashita H."/>
            <person name="Murakawa K."/>
            <person name="Fujimori K."/>
            <person name="Tanai H."/>
            <person name="Kimata M."/>
            <person name="Watanabe M."/>
            <person name="Hiraoka S."/>
            <person name="Chiba Y."/>
            <person name="Ishida S."/>
            <person name="Ono Y."/>
            <person name="Takiguchi S."/>
            <person name="Watanabe S."/>
            <person name="Yosida M."/>
            <person name="Hotuta T."/>
            <person name="Kusano J."/>
            <person name="Kanehori K."/>
            <person name="Takahashi-Fujii A."/>
            <person name="Hara H."/>
            <person name="Tanase T.-O."/>
            <person name="Nomura Y."/>
            <person name="Togiya S."/>
            <person name="Komai F."/>
            <person name="Hara R."/>
            <person name="Takeuchi K."/>
            <person name="Arita M."/>
            <person name="Imose N."/>
            <person name="Musashino K."/>
            <person name="Yuuki H."/>
            <person name="Oshima A."/>
            <person name="Sasaki N."/>
            <person name="Aotsuka S."/>
            <person name="Yoshikawa Y."/>
            <person name="Matsunawa H."/>
            <person name="Ichihara T."/>
            <person name="Shiohata N."/>
            <person name="Sano S."/>
            <person name="Moriya S."/>
            <person name="Momiyama H."/>
            <person name="Satoh N."/>
            <person name="Takami S."/>
            <person name="Terashima Y."/>
            <person name="Suzuki O."/>
            <person name="Nakagawa S."/>
            <person name="Senoh A."/>
            <person name="Mizoguchi H."/>
            <person name="Goto Y."/>
            <person name="Shimizu F."/>
            <person name="Wakebe H."/>
            <person name="Hishigaki H."/>
            <person name="Watanabe T."/>
            <person name="Sugiyama A."/>
            <person name="Takemoto M."/>
            <person name="Kawakami B."/>
            <person name="Yamazaki M."/>
            <person name="Watanabe K."/>
            <person name="Kumagai A."/>
            <person name="Itakura S."/>
            <person name="Fukuzumi Y."/>
            <person name="Fujimori Y."/>
            <person name="Komiyama M."/>
            <person name="Tashiro H."/>
            <person name="Tanigami A."/>
            <person name="Fujiwara T."/>
            <person name="Ono T."/>
            <person name="Yamada K."/>
            <person name="Fujii Y."/>
            <person name="Ozaki K."/>
            <person name="Hirao M."/>
            <person name="Ohmori Y."/>
            <person name="Kawabata A."/>
            <person name="Hikiji T."/>
            <person name="Kobatake N."/>
            <person name="Inagaki H."/>
            <person name="Ikema Y."/>
            <person name="Okamoto S."/>
            <person name="Okitani R."/>
            <person name="Kawakami T."/>
            <person name="Noguchi S."/>
            <person name="Itoh T."/>
            <person name="Shigeta K."/>
            <person name="Senba T."/>
            <person name="Matsumura K."/>
            <person name="Nakajima Y."/>
            <person name="Mizuno T."/>
            <person name="Morinaga M."/>
            <person name="Sasaki M."/>
            <person name="Togashi T."/>
            <person name="Oyama M."/>
            <person name="Hata H."/>
            <person name="Watanabe M."/>
            <person name="Komatsu T."/>
            <person name="Mizushima-Sugano J."/>
            <person name="Satoh T."/>
            <person name="Shirai Y."/>
            <person name="Takahashi Y."/>
            <person name="Nakagawa K."/>
            <person name="Okumura K."/>
            <person name="Nagase T."/>
            <person name="Nomura N."/>
            <person name="Kikuchi H."/>
            <person name="Masuho Y."/>
            <person name="Yamashita R."/>
            <person name="Nakai K."/>
            <person name="Yada T."/>
            <person name="Nakamura Y."/>
            <person name="Ohara O."/>
            <person name="Isogai T."/>
            <person name="Sugano S."/>
        </authorList>
    </citation>
    <scope>NUCLEOTIDE SEQUENCE [LARGE SCALE MRNA] (ISOFORM 1)</scope>
    <scope>VARIANT HIS-563</scope>
    <source>
        <tissue>Tongue</tissue>
    </source>
</reference>
<reference key="3">
    <citation type="submission" date="2005-07" db="EMBL/GenBank/DDBJ databases">
        <authorList>
            <person name="Mural R.J."/>
            <person name="Istrail S."/>
            <person name="Sutton G.G."/>
            <person name="Florea L."/>
            <person name="Halpern A.L."/>
            <person name="Mobarry C.M."/>
            <person name="Lippert R."/>
            <person name="Walenz B."/>
            <person name="Shatkay H."/>
            <person name="Dew I."/>
            <person name="Miller J.R."/>
            <person name="Flanigan M.J."/>
            <person name="Edwards N.J."/>
            <person name="Bolanos R."/>
            <person name="Fasulo D."/>
            <person name="Halldorsson B.V."/>
            <person name="Hannenhalli S."/>
            <person name="Turner R."/>
            <person name="Yooseph S."/>
            <person name="Lu F."/>
            <person name="Nusskern D.R."/>
            <person name="Shue B.C."/>
            <person name="Zheng X.H."/>
            <person name="Zhong F."/>
            <person name="Delcher A.L."/>
            <person name="Huson D.H."/>
            <person name="Kravitz S.A."/>
            <person name="Mouchard L."/>
            <person name="Reinert K."/>
            <person name="Remington K.A."/>
            <person name="Clark A.G."/>
            <person name="Waterman M.S."/>
            <person name="Eichler E.E."/>
            <person name="Adams M.D."/>
            <person name="Hunkapiller M.W."/>
            <person name="Myers E.W."/>
            <person name="Venter J.C."/>
        </authorList>
    </citation>
    <scope>NUCLEOTIDE SEQUENCE [LARGE SCALE GENOMIC DNA]</scope>
    <scope>VARIANT HIS-563</scope>
</reference>
<reference key="4">
    <citation type="journal article" date="2004" name="Genome Res.">
        <title>The status, quality, and expansion of the NIH full-length cDNA project: the Mammalian Gene Collection (MGC).</title>
        <authorList>
            <consortium name="The MGC Project Team"/>
        </authorList>
    </citation>
    <scope>NUCLEOTIDE SEQUENCE [LARGE SCALE MRNA] (ISOFORMS 1 AND 2)</scope>
    <scope>VARIANT MET-237</scope>
    <source>
        <tissue>Skin</tissue>
        <tissue>Testis</tissue>
    </source>
</reference>
<reference key="5">
    <citation type="journal article" date="1997" name="Clin. Cancer Res.">
        <title>P-cadherin is a basal cell-specific epithelial marker that is not expressed in prostate cancer.</title>
        <authorList>
            <person name="Jarrard D.F."/>
            <person name="Paul R."/>
            <person name="Van Bokhoven A."/>
            <person name="Nguyen S.H."/>
            <person name="Bova G.S."/>
            <person name="Wheelock M.J."/>
            <person name="Johnson K.R."/>
            <person name="Schalken J."/>
            <person name="Bussemakers M."/>
            <person name="Isaacs W.B."/>
        </authorList>
    </citation>
    <scope>NUCLEOTIDE SEQUENCE [GENOMIC DNA] OF 1-15</scope>
    <source>
        <tissue>Fetal brain</tissue>
    </source>
</reference>
<reference key="6">
    <citation type="journal article" date="1989" name="Cancer Res.">
        <title>Cadherin cell-adhesion molecules in human epithelial tissues and carcinomas.</title>
        <authorList>
            <person name="Shimoyama Y."/>
            <person name="Hirohashi S."/>
            <person name="Hirano S."/>
            <person name="Noguchi M."/>
            <person name="Shimosato Y."/>
            <person name="Takeichi M."/>
            <person name="Abe O."/>
        </authorList>
    </citation>
    <scope>TISSUE SPECIFICITY</scope>
</reference>
<reference key="7">
    <citation type="journal article" date="2005" name="Oncogene">
        <title>Adhesion signaling by a novel mitotic substrate of src kinases.</title>
        <authorList>
            <person name="Bhatt A.S."/>
            <person name="Erdjument-Bromage H."/>
            <person name="Tempst P."/>
            <person name="Craik C.S."/>
            <person name="Moasser M.M."/>
        </authorList>
    </citation>
    <scope>INTERACTION WITH CDCP1</scope>
</reference>
<reference key="8">
    <citation type="journal article" date="2001" name="Nat. Genet.">
        <title>Hypotrichosis with juvenile macular dystrophy is caused by a mutation in CDH3, encoding P-cadherin.</title>
        <authorList>
            <person name="Sprecher E."/>
            <person name="Bergman R."/>
            <person name="Richard G."/>
            <person name="Lurie R."/>
            <person name="Shalev S."/>
            <person name="Petronius D."/>
            <person name="Shalata A."/>
            <person name="Anbinder Y."/>
            <person name="Leibu R."/>
            <person name="Perlman I."/>
            <person name="Cohen N."/>
            <person name="Szargel R."/>
        </authorList>
    </citation>
    <scope>INVOLVEMENT IN HJMD</scope>
</reference>
<reference key="9">
    <citation type="journal article" date="2006" name="Mol. Cell">
        <title>Crystal structure of a beta-catenin/BCL9/Tcf4 complex.</title>
        <authorList>
            <person name="Sampietro J."/>
            <person name="Dahlberg C.L."/>
            <person name="Cho U.S."/>
            <person name="Hinds T.R."/>
            <person name="Kimelman D."/>
            <person name="Xu W."/>
        </authorList>
    </citation>
    <scope>INTERACTION WITH CTNNB1</scope>
</reference>
<reference key="10">
    <citation type="journal article" date="2011" name="BMC Syst. Biol.">
        <title>Initial characterization of the human central proteome.</title>
        <authorList>
            <person name="Burkard T.R."/>
            <person name="Planyavsky M."/>
            <person name="Kaupe I."/>
            <person name="Breitwieser F.P."/>
            <person name="Buerckstuemmer T."/>
            <person name="Bennett K.L."/>
            <person name="Superti-Furga G."/>
            <person name="Colinge J."/>
        </authorList>
    </citation>
    <scope>IDENTIFICATION BY MASS SPECTROMETRY [LARGE SCALE ANALYSIS]</scope>
</reference>
<reference key="11">
    <citation type="journal article" date="2002" name="J. Invest. Dermatol.">
        <title>A missense mutation in CDH3, encoding P-cadherin, causes hypotrichosis with juvenile macular dystrophy.</title>
        <authorList>
            <person name="Indelman M."/>
            <person name="Bergman R."/>
            <person name="Lurie R."/>
            <person name="Richard G."/>
            <person name="Miller B."/>
            <person name="Petronius D."/>
            <person name="Ciubutaro D."/>
            <person name="Leibu R."/>
            <person name="Sprecher E."/>
        </authorList>
    </citation>
    <scope>VARIANT HJMD HIS-503</scope>
</reference>
<reference key="12">
    <citation type="journal article" date="2005" name="J. Med. Genet.">
        <title>Distinct CDH3 mutations cause ectodermal dysplasia, ectrodactyly, macular dystrophy (EEM syndrome).</title>
        <authorList>
            <person name="Kjaer K.W."/>
            <person name="Hansen L."/>
            <person name="Schwabe G.C."/>
            <person name="Marques-de-Faria A.P."/>
            <person name="Eiberg H."/>
            <person name="Mundlos S."/>
            <person name="Tommerup N."/>
            <person name="Rosenberg T."/>
        </authorList>
    </citation>
    <scope>VARIANT EEMS ILE-322</scope>
    <scope>VARIANT HIS-563</scope>
</reference>
<gene>
    <name type="primary">CDH3</name>
    <name type="synonym">CDHP</name>
</gene>
<keyword id="KW-0002">3D-structure</keyword>
<keyword id="KW-0025">Alternative splicing</keyword>
<keyword id="KW-0106">Calcium</keyword>
<keyword id="KW-0130">Cell adhesion</keyword>
<keyword id="KW-1003">Cell membrane</keyword>
<keyword id="KW-0165">Cleavage on pair of basic residues</keyword>
<keyword id="KW-0225">Disease variant</keyword>
<keyword id="KW-0038">Ectodermal dysplasia</keyword>
<keyword id="KW-0325">Glycoprotein</keyword>
<keyword id="KW-1063">Hypotrichosis</keyword>
<keyword id="KW-0472">Membrane</keyword>
<keyword id="KW-0479">Metal-binding</keyword>
<keyword id="KW-1267">Proteomics identification</keyword>
<keyword id="KW-1185">Reference proteome</keyword>
<keyword id="KW-0677">Repeat</keyword>
<keyword id="KW-0716">Sensory transduction</keyword>
<keyword id="KW-0732">Signal</keyword>
<keyword id="KW-0812">Transmembrane</keyword>
<keyword id="KW-1133">Transmembrane helix</keyword>
<keyword id="KW-0844">Vision</keyword>